<reference key="1">
    <citation type="submission" date="2001-07" db="EMBL/GenBank/DDBJ databases">
        <title>Genome-wide discovery and analysis of human seven transmembrane helix receptor genes.</title>
        <authorList>
            <person name="Suwa M."/>
            <person name="Sato T."/>
            <person name="Okouchi I."/>
            <person name="Arita M."/>
            <person name="Futami K."/>
            <person name="Matsumoto S."/>
            <person name="Tsutsumi S."/>
            <person name="Aburatani H."/>
            <person name="Asai K."/>
            <person name="Akiyama Y."/>
        </authorList>
    </citation>
    <scope>NUCLEOTIDE SEQUENCE [GENOMIC DNA]</scope>
</reference>
<reference key="2">
    <citation type="journal article" date="2004" name="Nature">
        <title>The DNA sequence and biology of human chromosome 19.</title>
        <authorList>
            <person name="Grimwood J."/>
            <person name="Gordon L.A."/>
            <person name="Olsen A.S."/>
            <person name="Terry A."/>
            <person name="Schmutz J."/>
            <person name="Lamerdin J.E."/>
            <person name="Hellsten U."/>
            <person name="Goodstein D."/>
            <person name="Couronne O."/>
            <person name="Tran-Gyamfi M."/>
            <person name="Aerts A."/>
            <person name="Altherr M."/>
            <person name="Ashworth L."/>
            <person name="Bajorek E."/>
            <person name="Black S."/>
            <person name="Branscomb E."/>
            <person name="Caenepeel S."/>
            <person name="Carrano A.V."/>
            <person name="Caoile C."/>
            <person name="Chan Y.M."/>
            <person name="Christensen M."/>
            <person name="Cleland C.A."/>
            <person name="Copeland A."/>
            <person name="Dalin E."/>
            <person name="Dehal P."/>
            <person name="Denys M."/>
            <person name="Detter J.C."/>
            <person name="Escobar J."/>
            <person name="Flowers D."/>
            <person name="Fotopulos D."/>
            <person name="Garcia C."/>
            <person name="Georgescu A.M."/>
            <person name="Glavina T."/>
            <person name="Gomez M."/>
            <person name="Gonzales E."/>
            <person name="Groza M."/>
            <person name="Hammon N."/>
            <person name="Hawkins T."/>
            <person name="Haydu L."/>
            <person name="Ho I."/>
            <person name="Huang W."/>
            <person name="Israni S."/>
            <person name="Jett J."/>
            <person name="Kadner K."/>
            <person name="Kimball H."/>
            <person name="Kobayashi A."/>
            <person name="Larionov V."/>
            <person name="Leem S.-H."/>
            <person name="Lopez F."/>
            <person name="Lou Y."/>
            <person name="Lowry S."/>
            <person name="Malfatti S."/>
            <person name="Martinez D."/>
            <person name="McCready P.M."/>
            <person name="Medina C."/>
            <person name="Morgan J."/>
            <person name="Nelson K."/>
            <person name="Nolan M."/>
            <person name="Ovcharenko I."/>
            <person name="Pitluck S."/>
            <person name="Pollard M."/>
            <person name="Popkie A.P."/>
            <person name="Predki P."/>
            <person name="Quan G."/>
            <person name="Ramirez L."/>
            <person name="Rash S."/>
            <person name="Retterer J."/>
            <person name="Rodriguez A."/>
            <person name="Rogers S."/>
            <person name="Salamov A."/>
            <person name="Salazar A."/>
            <person name="She X."/>
            <person name="Smith D."/>
            <person name="Slezak T."/>
            <person name="Solovyev V."/>
            <person name="Thayer N."/>
            <person name="Tice H."/>
            <person name="Tsai M."/>
            <person name="Ustaszewska A."/>
            <person name="Vo N."/>
            <person name="Wagner M."/>
            <person name="Wheeler J."/>
            <person name="Wu K."/>
            <person name="Xie G."/>
            <person name="Yang J."/>
            <person name="Dubchak I."/>
            <person name="Furey T.S."/>
            <person name="DeJong P."/>
            <person name="Dickson M."/>
            <person name="Gordon D."/>
            <person name="Eichler E.E."/>
            <person name="Pennacchio L.A."/>
            <person name="Richardson P."/>
            <person name="Stubbs L."/>
            <person name="Rokhsar D.S."/>
            <person name="Myers R.M."/>
            <person name="Rubin E.M."/>
            <person name="Lucas S.M."/>
        </authorList>
    </citation>
    <scope>NUCLEOTIDE SEQUENCE [LARGE SCALE GENOMIC DNA]</scope>
</reference>
<reference key="3">
    <citation type="journal article" date="2002" name="Genomics">
        <title>DEFOG: a practical scheme for deciphering families of genes.</title>
        <authorList>
            <person name="Fuchs T."/>
            <person name="Malecova B."/>
            <person name="Linhart C."/>
            <person name="Sharan R."/>
            <person name="Khen M."/>
            <person name="Herwig R."/>
            <person name="Shmulevich D."/>
            <person name="Elkon R."/>
            <person name="Steinfath M."/>
            <person name="O'Brien J.K."/>
            <person name="Radelof U."/>
            <person name="Lehrach H."/>
            <person name="Lancet D."/>
            <person name="Shamir R."/>
        </authorList>
    </citation>
    <scope>NUCLEOTIDE SEQUENCE [GENOMIC DNA] OF 69-284</scope>
</reference>
<feature type="chain" id="PRO_0000150642" description="Putative olfactory receptor 7A2">
    <location>
        <begin position="1"/>
        <end position="310"/>
    </location>
</feature>
<feature type="topological domain" description="Extracellular" evidence="1">
    <location>
        <begin position="1"/>
        <end position="26"/>
    </location>
</feature>
<feature type="transmembrane region" description="Helical; Name=1" evidence="1">
    <location>
        <begin position="27"/>
        <end position="47"/>
    </location>
</feature>
<feature type="topological domain" description="Cytoplasmic" evidence="1">
    <location>
        <begin position="48"/>
        <end position="55"/>
    </location>
</feature>
<feature type="transmembrane region" description="Helical; Name=2" evidence="1">
    <location>
        <begin position="56"/>
        <end position="76"/>
    </location>
</feature>
<feature type="topological domain" description="Extracellular" evidence="1">
    <location>
        <begin position="77"/>
        <end position="100"/>
    </location>
</feature>
<feature type="transmembrane region" description="Helical; Name=3" evidence="1">
    <location>
        <begin position="101"/>
        <end position="121"/>
    </location>
</feature>
<feature type="topological domain" description="Cytoplasmic" evidence="1">
    <location>
        <begin position="122"/>
        <end position="140"/>
    </location>
</feature>
<feature type="transmembrane region" description="Helical; Name=4" evidence="1">
    <location>
        <begin position="141"/>
        <end position="161"/>
    </location>
</feature>
<feature type="topological domain" description="Extracellular" evidence="1">
    <location>
        <begin position="162"/>
        <end position="198"/>
    </location>
</feature>
<feature type="transmembrane region" description="Helical; Name=5" evidence="1">
    <location>
        <begin position="199"/>
        <end position="218"/>
    </location>
</feature>
<feature type="topological domain" description="Cytoplasmic" evidence="1">
    <location>
        <begin position="219"/>
        <end position="238"/>
    </location>
</feature>
<feature type="transmembrane region" description="Helical; Name=6" evidence="1">
    <location>
        <begin position="239"/>
        <end position="259"/>
    </location>
</feature>
<feature type="topological domain" description="Extracellular" evidence="1">
    <location>
        <begin position="260"/>
        <end position="272"/>
    </location>
</feature>
<feature type="transmembrane region" description="Helical; Name=7" evidence="1">
    <location>
        <begin position="273"/>
        <end position="293"/>
    </location>
</feature>
<feature type="topological domain" description="Cytoplasmic" evidence="1">
    <location>
        <begin position="294"/>
        <end position="310"/>
    </location>
</feature>
<feature type="glycosylation site" description="N-linked (GlcNAc...) asparagine" evidence="1">
    <location>
        <position position="6"/>
    </location>
</feature>
<feature type="disulfide bond" evidence="2">
    <location>
        <begin position="98"/>
        <end position="190"/>
    </location>
</feature>
<sequence>MVKAGNETQISEFLLLGFSEKQELQPFLFGLFLSMYLVTVLGNLLIILAAISDSCLHTPMYFFLSNLSFVDICFASTMVPKMLVNIQTQSKVITYAGCITQMCFFVLFIVLDSLLLTVMAYDQFVAICHPLHYTVIMSPQLCGLLVLVSWIMSVLNSMLQSLVTLQLSFCTDLEIPHFFCELNEMIHLACSDTFVNNMVMHFAAVLLDGGPLVGILYSYCRIVSSIRAISSTQGKYKALSTCASHLSVVSIFYGTGLGVYLSSTMTQNLHSTAVASVMYTVVTPMLNPFIYSLRNKDIKGALTQFFRGKQ</sequence>
<protein>
    <recommendedName>
        <fullName>Putative olfactory receptor 7A2</fullName>
    </recommendedName>
    <alternativeName>
        <fullName>Putative olfactory receptor 7A7</fullName>
    </alternativeName>
</protein>
<organism>
    <name type="scientific">Homo sapiens</name>
    <name type="common">Human</name>
    <dbReference type="NCBI Taxonomy" id="9606"/>
    <lineage>
        <taxon>Eukaryota</taxon>
        <taxon>Metazoa</taxon>
        <taxon>Chordata</taxon>
        <taxon>Craniata</taxon>
        <taxon>Vertebrata</taxon>
        <taxon>Euteleostomi</taxon>
        <taxon>Mammalia</taxon>
        <taxon>Eutheria</taxon>
        <taxon>Euarchontoglires</taxon>
        <taxon>Primates</taxon>
        <taxon>Haplorrhini</taxon>
        <taxon>Catarrhini</taxon>
        <taxon>Hominidae</taxon>
        <taxon>Homo</taxon>
    </lineage>
</organism>
<accession>Q8NGA2</accession>
<accession>Q96R95</accession>
<name>OR7A2_HUMAN</name>
<keyword id="KW-1003">Cell membrane</keyword>
<keyword id="KW-1015">Disulfide bond</keyword>
<keyword id="KW-0297">G-protein coupled receptor</keyword>
<keyword id="KW-0325">Glycoprotein</keyword>
<keyword id="KW-0472">Membrane</keyword>
<keyword id="KW-0552">Olfaction</keyword>
<keyword id="KW-0675">Receptor</keyword>
<keyword id="KW-1185">Reference proteome</keyword>
<keyword id="KW-0716">Sensory transduction</keyword>
<keyword id="KW-0807">Transducer</keyword>
<keyword id="KW-0812">Transmembrane</keyword>
<keyword id="KW-1133">Transmembrane helix</keyword>
<proteinExistence type="uncertain"/>
<dbReference type="EMBL" id="AB065924">
    <property type="protein sequence ID" value="BAC06139.1"/>
    <property type="molecule type" value="Genomic_DNA"/>
</dbReference>
<dbReference type="EMBL" id="AC005255">
    <property type="status" value="NOT_ANNOTATED_CDS"/>
    <property type="molecule type" value="Genomic_DNA"/>
</dbReference>
<dbReference type="EMBL" id="AF399544">
    <property type="protein sequence ID" value="AAK95029.1"/>
    <property type="molecule type" value="Genomic_DNA"/>
</dbReference>
<dbReference type="SMR" id="Q8NGA2"/>
<dbReference type="FunCoup" id="Q8NGA2">
    <property type="interactions" value="727"/>
</dbReference>
<dbReference type="GlyCosmos" id="Q8NGA2">
    <property type="glycosylation" value="1 site, No reported glycans"/>
</dbReference>
<dbReference type="GlyGen" id="Q8NGA2">
    <property type="glycosylation" value="1 site"/>
</dbReference>
<dbReference type="BioMuta" id="HGNC:8370"/>
<dbReference type="DMDM" id="38372652"/>
<dbReference type="MassIVE" id="Q8NGA2"/>
<dbReference type="AGR" id="HGNC:8370"/>
<dbReference type="GeneCards" id="OR7A2P"/>
<dbReference type="HGNC" id="HGNC:8370">
    <property type="gene designation" value="OR7A2P"/>
</dbReference>
<dbReference type="neXtProt" id="NX_Q8NGA2"/>
<dbReference type="InParanoid" id="Q8NGA2"/>
<dbReference type="PAN-GO" id="Q8NGA2">
    <property type="GO annotations" value="3 GO annotations based on evolutionary models"/>
</dbReference>
<dbReference type="PhylomeDB" id="Q8NGA2"/>
<dbReference type="PathwayCommons" id="Q8NGA2"/>
<dbReference type="Reactome" id="R-HSA-9752946">
    <property type="pathway name" value="Expression and translocation of olfactory receptors"/>
</dbReference>
<dbReference type="Pharos" id="Q8NGA2">
    <property type="development level" value="Tdark"/>
</dbReference>
<dbReference type="Proteomes" id="UP000005640">
    <property type="component" value="Unplaced"/>
</dbReference>
<dbReference type="RNAct" id="Q8NGA2">
    <property type="molecule type" value="protein"/>
</dbReference>
<dbReference type="GO" id="GO:0005886">
    <property type="term" value="C:plasma membrane"/>
    <property type="evidence" value="ECO:0000318"/>
    <property type="project" value="GO_Central"/>
</dbReference>
<dbReference type="GO" id="GO:0004930">
    <property type="term" value="F:G protein-coupled receptor activity"/>
    <property type="evidence" value="ECO:0007669"/>
    <property type="project" value="UniProtKB-KW"/>
</dbReference>
<dbReference type="GO" id="GO:0004984">
    <property type="term" value="F:olfactory receptor activity"/>
    <property type="evidence" value="ECO:0000318"/>
    <property type="project" value="GO_Central"/>
</dbReference>
<dbReference type="GO" id="GO:0007165">
    <property type="term" value="P:signal transduction"/>
    <property type="evidence" value="ECO:0000318"/>
    <property type="project" value="GO_Central"/>
</dbReference>
<dbReference type="CDD" id="cd15234">
    <property type="entry name" value="7tmA_OR7-like"/>
    <property type="match status" value="1"/>
</dbReference>
<dbReference type="FunFam" id="1.10.1220.70:FF:000001">
    <property type="entry name" value="Olfactory receptor"/>
    <property type="match status" value="1"/>
</dbReference>
<dbReference type="FunFam" id="1.20.1070.10:FF:000009">
    <property type="entry name" value="Olfactory receptor"/>
    <property type="match status" value="1"/>
</dbReference>
<dbReference type="Gene3D" id="1.20.1070.10">
    <property type="entry name" value="Rhodopsin 7-helix transmembrane proteins"/>
    <property type="match status" value="1"/>
</dbReference>
<dbReference type="InterPro" id="IPR000276">
    <property type="entry name" value="GPCR_Rhodpsn"/>
</dbReference>
<dbReference type="InterPro" id="IPR017452">
    <property type="entry name" value="GPCR_Rhodpsn_7TM"/>
</dbReference>
<dbReference type="InterPro" id="IPR000725">
    <property type="entry name" value="Olfact_rcpt"/>
</dbReference>
<dbReference type="PANTHER" id="PTHR48001">
    <property type="entry name" value="OLFACTORY RECEPTOR"/>
    <property type="match status" value="1"/>
</dbReference>
<dbReference type="Pfam" id="PF13853">
    <property type="entry name" value="7tm_4"/>
    <property type="match status" value="1"/>
</dbReference>
<dbReference type="PRINTS" id="PR00237">
    <property type="entry name" value="GPCRRHODOPSN"/>
</dbReference>
<dbReference type="PRINTS" id="PR00245">
    <property type="entry name" value="OLFACTORYR"/>
</dbReference>
<dbReference type="SUPFAM" id="SSF81321">
    <property type="entry name" value="Family A G protein-coupled receptor-like"/>
    <property type="match status" value="1"/>
</dbReference>
<dbReference type="PROSITE" id="PS50262">
    <property type="entry name" value="G_PROTEIN_RECEP_F1_2"/>
    <property type="match status" value="1"/>
</dbReference>
<gene>
    <name type="primary">OR7A2P</name>
    <name type="synonym">OR7A2</name>
    <name type="synonym">OR7A7</name>
</gene>
<comment type="function">
    <text evidence="3">Odorant receptor.</text>
</comment>
<comment type="subcellular location">
    <subcellularLocation>
        <location>Cell membrane</location>
        <topology>Multi-pass membrane protein</topology>
    </subcellularLocation>
</comment>
<comment type="similarity">
    <text evidence="2">Belongs to the G-protein coupled receptor 1 family.</text>
</comment>
<comment type="caution">
    <text evidence="3">Could be the product of a pseudogene.</text>
</comment>
<comment type="online information" name="Human Olfactory Receptor Data Exploratorium (HORDE)">
    <link uri="http://genome.weizmann.ac.il/horde/card/index/symbol:OR7A2P"/>
</comment>
<evidence type="ECO:0000255" key="1"/>
<evidence type="ECO:0000255" key="2">
    <source>
        <dbReference type="PROSITE-ProRule" id="PRU00521"/>
    </source>
</evidence>
<evidence type="ECO:0000305" key="3"/>